<proteinExistence type="inferred from homology"/>
<comment type="function">
    <text evidence="1">Binds 16S rRNA, required for the assembly of 30S particles and may also be responsible for determining the conformation of the 16S rRNA at the A site.</text>
</comment>
<comment type="subunit">
    <text evidence="1">Part of the 30S ribosomal subunit. Contacts proteins S3 and S10.</text>
</comment>
<comment type="similarity">
    <text evidence="1">Belongs to the universal ribosomal protein uS14 family.</text>
</comment>
<protein>
    <recommendedName>
        <fullName evidence="1">Small ribosomal subunit protein uS14</fullName>
    </recommendedName>
    <alternativeName>
        <fullName evidence="2">30S ribosomal protein S14</fullName>
    </alternativeName>
</protein>
<reference key="1">
    <citation type="journal article" date="2007" name="Genes Dev.">
        <title>New insights into Acinetobacter baumannii pathogenesis revealed by high-density pyrosequencing and transposon mutagenesis.</title>
        <authorList>
            <person name="Smith M.G."/>
            <person name="Gianoulis T.A."/>
            <person name="Pukatzki S."/>
            <person name="Mekalanos J.J."/>
            <person name="Ornston L.N."/>
            <person name="Gerstein M."/>
            <person name="Snyder M."/>
        </authorList>
    </citation>
    <scope>NUCLEOTIDE SEQUENCE [LARGE SCALE GENOMIC DNA]</scope>
    <source>
        <strain>ATCC 17978 / DSM 105126 / CIP 53.77 / LMG 1025 / NCDC KC755 / 5377</strain>
    </source>
</reference>
<keyword id="KW-0687">Ribonucleoprotein</keyword>
<keyword id="KW-0689">Ribosomal protein</keyword>
<keyword id="KW-0694">RNA-binding</keyword>
<keyword id="KW-0699">rRNA-binding</keyword>
<accession>A3M971</accession>
<evidence type="ECO:0000255" key="1">
    <source>
        <dbReference type="HAMAP-Rule" id="MF_00537"/>
    </source>
</evidence>
<evidence type="ECO:0000305" key="2"/>
<gene>
    <name evidence="1" type="primary">rpsN</name>
    <name type="ordered locus">A1S_3068</name>
</gene>
<organism>
    <name type="scientific">Acinetobacter baumannii (strain ATCC 17978 / DSM 105126 / CIP 53.77 / LMG 1025 / NCDC KC755 / 5377)</name>
    <dbReference type="NCBI Taxonomy" id="400667"/>
    <lineage>
        <taxon>Bacteria</taxon>
        <taxon>Pseudomonadati</taxon>
        <taxon>Pseudomonadota</taxon>
        <taxon>Gammaproteobacteria</taxon>
        <taxon>Moraxellales</taxon>
        <taxon>Moraxellaceae</taxon>
        <taxon>Acinetobacter</taxon>
        <taxon>Acinetobacter calcoaceticus/baumannii complex</taxon>
    </lineage>
</organism>
<feature type="chain" id="PRO_1000128278" description="Small ribosomal subunit protein uS14">
    <location>
        <begin position="1"/>
        <end position="101"/>
    </location>
</feature>
<name>RS14_ACIBT</name>
<sequence>MAKKGMINRELKREKTVAKYAAKRAELKATIANVNASDEERFEAMLKLQALPRNASPVRLRNRCGLTGRPHGYFRKFGLSRNKLRDTVMQGDVPGVVKASW</sequence>
<dbReference type="EMBL" id="CP000521">
    <property type="protein sequence ID" value="ABO13465.2"/>
    <property type="molecule type" value="Genomic_DNA"/>
</dbReference>
<dbReference type="RefSeq" id="WP_001074624.1">
    <property type="nucleotide sequence ID" value="NZ_CP053098.1"/>
</dbReference>
<dbReference type="SMR" id="A3M971"/>
<dbReference type="GeneID" id="92895304"/>
<dbReference type="KEGG" id="acb:A1S_3068"/>
<dbReference type="HOGENOM" id="CLU_139869_0_1_6"/>
<dbReference type="GO" id="GO:0005737">
    <property type="term" value="C:cytoplasm"/>
    <property type="evidence" value="ECO:0007669"/>
    <property type="project" value="UniProtKB-ARBA"/>
</dbReference>
<dbReference type="GO" id="GO:0015935">
    <property type="term" value="C:small ribosomal subunit"/>
    <property type="evidence" value="ECO:0007669"/>
    <property type="project" value="TreeGrafter"/>
</dbReference>
<dbReference type="GO" id="GO:0019843">
    <property type="term" value="F:rRNA binding"/>
    <property type="evidence" value="ECO:0007669"/>
    <property type="project" value="UniProtKB-UniRule"/>
</dbReference>
<dbReference type="GO" id="GO:0003735">
    <property type="term" value="F:structural constituent of ribosome"/>
    <property type="evidence" value="ECO:0007669"/>
    <property type="project" value="InterPro"/>
</dbReference>
<dbReference type="GO" id="GO:0006412">
    <property type="term" value="P:translation"/>
    <property type="evidence" value="ECO:0007669"/>
    <property type="project" value="UniProtKB-UniRule"/>
</dbReference>
<dbReference type="FunFam" id="1.10.287.1480:FF:000001">
    <property type="entry name" value="30S ribosomal protein S14"/>
    <property type="match status" value="1"/>
</dbReference>
<dbReference type="Gene3D" id="1.10.287.1480">
    <property type="match status" value="1"/>
</dbReference>
<dbReference type="HAMAP" id="MF_00537">
    <property type="entry name" value="Ribosomal_uS14_1"/>
    <property type="match status" value="1"/>
</dbReference>
<dbReference type="InterPro" id="IPR001209">
    <property type="entry name" value="Ribosomal_uS14"/>
</dbReference>
<dbReference type="InterPro" id="IPR023036">
    <property type="entry name" value="Ribosomal_uS14_bac/plastid"/>
</dbReference>
<dbReference type="InterPro" id="IPR018271">
    <property type="entry name" value="Ribosomal_uS14_CS"/>
</dbReference>
<dbReference type="NCBIfam" id="NF006477">
    <property type="entry name" value="PRK08881.1"/>
    <property type="match status" value="1"/>
</dbReference>
<dbReference type="PANTHER" id="PTHR19836">
    <property type="entry name" value="30S RIBOSOMAL PROTEIN S14"/>
    <property type="match status" value="1"/>
</dbReference>
<dbReference type="PANTHER" id="PTHR19836:SF19">
    <property type="entry name" value="SMALL RIBOSOMAL SUBUNIT PROTEIN US14M"/>
    <property type="match status" value="1"/>
</dbReference>
<dbReference type="Pfam" id="PF00253">
    <property type="entry name" value="Ribosomal_S14"/>
    <property type="match status" value="1"/>
</dbReference>
<dbReference type="SUPFAM" id="SSF57716">
    <property type="entry name" value="Glucocorticoid receptor-like (DNA-binding domain)"/>
    <property type="match status" value="1"/>
</dbReference>
<dbReference type="PROSITE" id="PS00527">
    <property type="entry name" value="RIBOSOMAL_S14"/>
    <property type="match status" value="1"/>
</dbReference>